<protein>
    <recommendedName>
        <fullName>Pyruvate-flavodoxin oxidoreductase</fullName>
        <ecNumber>1.2.7.-</ecNumber>
    </recommendedName>
</protein>
<keyword id="KW-0004">4Fe-4S</keyword>
<keyword id="KW-0249">Electron transport</keyword>
<keyword id="KW-0408">Iron</keyword>
<keyword id="KW-0411">Iron-sulfur</keyword>
<keyword id="KW-0479">Metal-binding</keyword>
<keyword id="KW-0535">Nitrogen fixation</keyword>
<keyword id="KW-0560">Oxidoreductase</keyword>
<keyword id="KW-0677">Repeat</keyword>
<keyword id="KW-0813">Transport</keyword>
<comment type="function">
    <text>Oxidoreductase required for the transfer of electrons from pyruvate to flavodoxin, which reduces nitrogenase.</text>
</comment>
<comment type="catalytic activity">
    <reaction>
        <text>oxidized [flavodoxin] + pyruvate + CoA + 2 H(+) = reduced [flavodoxin] + acetyl-CoA + CO2</text>
        <dbReference type="Rhea" id="RHEA:44140"/>
        <dbReference type="Rhea" id="RHEA-COMP:10622"/>
        <dbReference type="Rhea" id="RHEA-COMP:10623"/>
        <dbReference type="ChEBI" id="CHEBI:15361"/>
        <dbReference type="ChEBI" id="CHEBI:15378"/>
        <dbReference type="ChEBI" id="CHEBI:16526"/>
        <dbReference type="ChEBI" id="CHEBI:57287"/>
        <dbReference type="ChEBI" id="CHEBI:57288"/>
        <dbReference type="ChEBI" id="CHEBI:57618"/>
        <dbReference type="ChEBI" id="CHEBI:58210"/>
    </reaction>
</comment>
<comment type="similarity">
    <text evidence="1">Belongs to the pyruvate:ferredoxin/flavodoxin oxidoreductase family.</text>
</comment>
<gene>
    <name type="primary">nifJ</name>
</gene>
<organism>
    <name type="scientific">Nostoc sp. (strain ATCC 29151 / PCC 7119)</name>
    <name type="common">Anabaena sp.</name>
    <dbReference type="NCBI Taxonomy" id="1168"/>
    <lineage>
        <taxon>Bacteria</taxon>
        <taxon>Bacillati</taxon>
        <taxon>Cyanobacteriota</taxon>
        <taxon>Cyanophyceae</taxon>
        <taxon>Nostocales</taxon>
        <taxon>Nostocaceae</taxon>
        <taxon>Nostoc</taxon>
    </lineage>
</organism>
<accession>Q9APC2</accession>
<evidence type="ECO:0000305" key="1"/>
<proteinExistence type="inferred from homology"/>
<name>NIFJ_NOSSO</name>
<sequence>IDGNEAVAQVVYQINEVIAIYPITPSSPMAEWADAWASEGKPNIWGTVPTVVQMQSEGGVAGAVHGALQTGSLTTTFTASQGLLLMIPNMYKIAGELTPTVFHIAARSLAAQALSIFGDHSDVMATRGTGFAMLCAASVQEAHDFALISTRTTLESRIPFLHFFDGFRTSHEINKIELLTTENLQTFIPNELVIAHRSRAFTPDNSFTRGTGQNPDVYFQGEEGTVIYYIACQASLKSMDEFAQMTGRQYQLFEYHGDSTAERVIVLMGSGCETVHETVDYLNTLGEKVGVIKVRLYHPFDSQRFIAALPPTTRSIAVLDRTKEPGASGEPLYLDVVAALYEAGEQLPKVVGGRYGLSSKEFTPGMVKAVFDNLAATIPKNHFTIGINDDVSHTSLDYDPDFNI</sequence>
<feature type="chain" id="PRO_0000215552" description="Pyruvate-flavodoxin oxidoreductase">
    <location>
        <begin position="1" status="less than"/>
        <end position="404" status="greater than"/>
    </location>
</feature>
<feature type="non-terminal residue">
    <location>
        <position position="1"/>
    </location>
</feature>
<feature type="non-terminal residue">
    <location>
        <position position="404"/>
    </location>
</feature>
<dbReference type="EC" id="1.2.7.-"/>
<dbReference type="EMBL" id="AF307353">
    <property type="protein sequence ID" value="AAK14076.1"/>
    <property type="molecule type" value="Genomic_DNA"/>
</dbReference>
<dbReference type="SMR" id="Q9APC2"/>
<dbReference type="GO" id="GO:0051539">
    <property type="term" value="F:4 iron, 4 sulfur cluster binding"/>
    <property type="evidence" value="ECO:0007669"/>
    <property type="project" value="UniProtKB-KW"/>
</dbReference>
<dbReference type="GO" id="GO:0046872">
    <property type="term" value="F:metal ion binding"/>
    <property type="evidence" value="ECO:0007669"/>
    <property type="project" value="UniProtKB-KW"/>
</dbReference>
<dbReference type="GO" id="GO:0043873">
    <property type="term" value="F:pyruvate-flavodoxin oxidoreductase activity"/>
    <property type="evidence" value="ECO:0007669"/>
    <property type="project" value="RHEA"/>
</dbReference>
<dbReference type="GO" id="GO:0009399">
    <property type="term" value="P:nitrogen fixation"/>
    <property type="evidence" value="ECO:0007669"/>
    <property type="project" value="UniProtKB-KW"/>
</dbReference>
<dbReference type="GO" id="GO:0006979">
    <property type="term" value="P:response to oxidative stress"/>
    <property type="evidence" value="ECO:0007669"/>
    <property type="project" value="TreeGrafter"/>
</dbReference>
<dbReference type="CDD" id="cd07034">
    <property type="entry name" value="TPP_PYR_PFOR_IOR-alpha_like"/>
    <property type="match status" value="1"/>
</dbReference>
<dbReference type="FunFam" id="3.40.50.920:FF:000007">
    <property type="entry name" value="Pyruvate:ferredoxin (Flavodoxin) oxidoreductase"/>
    <property type="match status" value="1"/>
</dbReference>
<dbReference type="FunFam" id="3.40.50.970:FF:000012">
    <property type="entry name" value="Pyruvate:ferredoxin (Flavodoxin) oxidoreductase"/>
    <property type="match status" value="1"/>
</dbReference>
<dbReference type="Gene3D" id="3.40.50.920">
    <property type="match status" value="1"/>
</dbReference>
<dbReference type="Gene3D" id="3.40.50.970">
    <property type="match status" value="1"/>
</dbReference>
<dbReference type="InterPro" id="IPR033412">
    <property type="entry name" value="PFOR_II"/>
</dbReference>
<dbReference type="InterPro" id="IPR050722">
    <property type="entry name" value="Pyruvate:ferred/Flavod_OxRd"/>
</dbReference>
<dbReference type="InterPro" id="IPR002880">
    <property type="entry name" value="Pyrv_Fd/Flavodoxin_OxRdtase_N"/>
</dbReference>
<dbReference type="InterPro" id="IPR029061">
    <property type="entry name" value="THDP-binding"/>
</dbReference>
<dbReference type="InterPro" id="IPR009014">
    <property type="entry name" value="Transketo_C/PFOR_II"/>
</dbReference>
<dbReference type="PANTHER" id="PTHR32154">
    <property type="entry name" value="PYRUVATE-FLAVODOXIN OXIDOREDUCTASE-RELATED"/>
    <property type="match status" value="1"/>
</dbReference>
<dbReference type="PANTHER" id="PTHR32154:SF0">
    <property type="entry name" value="PYRUVATE-FLAVODOXIN OXIDOREDUCTASE-RELATED"/>
    <property type="match status" value="1"/>
</dbReference>
<dbReference type="Pfam" id="PF17147">
    <property type="entry name" value="PFOR_II"/>
    <property type="match status" value="1"/>
</dbReference>
<dbReference type="Pfam" id="PF01855">
    <property type="entry name" value="POR_N"/>
    <property type="match status" value="1"/>
</dbReference>
<dbReference type="SUPFAM" id="SSF52518">
    <property type="entry name" value="Thiamin diphosphate-binding fold (THDP-binding)"/>
    <property type="match status" value="1"/>
</dbReference>
<dbReference type="SUPFAM" id="SSF52922">
    <property type="entry name" value="TK C-terminal domain-like"/>
    <property type="match status" value="1"/>
</dbReference>
<reference key="1">
    <citation type="journal article" date="2001" name="FEMS Microbiol. Lett.">
        <title>Molecular evidence for the aerobic expression of nifJ, encoding pyruvate:ferredoxin oxidoreductase, in cyanobacteria.</title>
        <authorList>
            <person name="Schmitz O."/>
            <person name="Gurke J."/>
            <person name="Bothe H."/>
        </authorList>
    </citation>
    <scope>NUCLEOTIDE SEQUENCE [GENOMIC DNA]</scope>
</reference>